<sequence length="289" mass="30992">MSAGIRTYLELMRYKNCLMAGFAAAIGTLIAFNILISGTSTPNFEDAFPFLDAGLVFLVVFLVSGAGNAINDYFDIKIDSINRPERPIPSGRVKAKEAFYFSYLLFALGTLIAFSINSICGSIALFNSLLLILYAKTLKGTPLLGNLSIGYLTGSVFLFGASIFGFGGIKALSVLFLLAALAITAREIVKDIEDMEGDSLEGADTLPLRIGAKKAGYLAVLTGLLAVILSPLPYFMSVLGLRYIYLVSLADLGFLAAIIQLLVRNNPTKSSKLFKIAMFFALIAFIAGV</sequence>
<comment type="function">
    <text evidence="1">Prenyltransferase that catalyzes the transfer of the geranylgeranyl moiety of geranylgeranyl diphosphate (GGPP) to the C2 hydroxyl of (S)-3-O-geranylgeranylglyceryl phosphate (GGGP). This reaction is the second ether-bond-formation step in the biosynthesis of archaeal membrane lipids.</text>
</comment>
<comment type="catalytic activity">
    <reaction evidence="1">
        <text>sn-3-O-(geranylgeranyl)glycerol 1-phosphate + (2E,6E,10E)-geranylgeranyl diphosphate = 2,3-bis-O-(geranylgeranyl)-sn-glycerol 1-phosphate + diphosphate</text>
        <dbReference type="Rhea" id="RHEA:18109"/>
        <dbReference type="ChEBI" id="CHEBI:33019"/>
        <dbReference type="ChEBI" id="CHEBI:57677"/>
        <dbReference type="ChEBI" id="CHEBI:58756"/>
        <dbReference type="ChEBI" id="CHEBI:58837"/>
        <dbReference type="EC" id="2.5.1.42"/>
    </reaction>
</comment>
<comment type="cofactor">
    <cofactor evidence="1">
        <name>Mg(2+)</name>
        <dbReference type="ChEBI" id="CHEBI:18420"/>
    </cofactor>
</comment>
<comment type="pathway">
    <text evidence="1">Membrane lipid metabolism; glycerophospholipid metabolism.</text>
</comment>
<comment type="subcellular location">
    <subcellularLocation>
        <location evidence="1">Cell membrane</location>
        <topology evidence="1">Multi-pass membrane protein</topology>
    </subcellularLocation>
</comment>
<comment type="similarity">
    <text evidence="1">Belongs to the UbiA prenyltransferase family. DGGGP synthase subfamily.</text>
</comment>
<comment type="sequence caution" evidence="2">
    <conflict type="erroneous initiation">
        <sequence resource="EMBL-CDS" id="AAM31771"/>
    </conflict>
</comment>
<evidence type="ECO:0000255" key="1">
    <source>
        <dbReference type="HAMAP-Rule" id="MF_01286"/>
    </source>
</evidence>
<evidence type="ECO:0000305" key="2"/>
<gene>
    <name type="ordered locus">MM_2075</name>
</gene>
<dbReference type="EC" id="2.5.1.42" evidence="1"/>
<dbReference type="EMBL" id="AE008384">
    <property type="protein sequence ID" value="AAM31771.1"/>
    <property type="status" value="ALT_INIT"/>
    <property type="molecule type" value="Genomic_DNA"/>
</dbReference>
<dbReference type="RefSeq" id="WP_015412297.1">
    <property type="nucleotide sequence ID" value="NC_003901.1"/>
</dbReference>
<dbReference type="SMR" id="Q8PV96"/>
<dbReference type="KEGG" id="mma:MM_2075"/>
<dbReference type="PATRIC" id="fig|192952.21.peg.2382"/>
<dbReference type="eggNOG" id="arCOG00476">
    <property type="taxonomic scope" value="Archaea"/>
</dbReference>
<dbReference type="HOGENOM" id="CLU_073311_1_1_2"/>
<dbReference type="UniPathway" id="UPA00940"/>
<dbReference type="Proteomes" id="UP000000595">
    <property type="component" value="Chromosome"/>
</dbReference>
<dbReference type="GO" id="GO:0005886">
    <property type="term" value="C:plasma membrane"/>
    <property type="evidence" value="ECO:0007669"/>
    <property type="project" value="UniProtKB-SubCell"/>
</dbReference>
<dbReference type="GO" id="GO:0047295">
    <property type="term" value="F:geranylgeranylglycerol-phosphate geranylgeranyltransferase activity"/>
    <property type="evidence" value="ECO:0007669"/>
    <property type="project" value="UniProtKB-UniRule"/>
</dbReference>
<dbReference type="GO" id="GO:0000287">
    <property type="term" value="F:magnesium ion binding"/>
    <property type="evidence" value="ECO:0007669"/>
    <property type="project" value="UniProtKB-UniRule"/>
</dbReference>
<dbReference type="GO" id="GO:0046474">
    <property type="term" value="P:glycerophospholipid biosynthetic process"/>
    <property type="evidence" value="ECO:0007669"/>
    <property type="project" value="UniProtKB-UniRule"/>
</dbReference>
<dbReference type="CDD" id="cd13961">
    <property type="entry name" value="PT_UbiA_DGGGPS"/>
    <property type="match status" value="1"/>
</dbReference>
<dbReference type="Gene3D" id="1.10.357.140">
    <property type="entry name" value="UbiA prenyltransferase"/>
    <property type="match status" value="1"/>
</dbReference>
<dbReference type="Gene3D" id="1.20.120.1780">
    <property type="entry name" value="UbiA prenyltransferase"/>
    <property type="match status" value="1"/>
</dbReference>
<dbReference type="HAMAP" id="MF_01286">
    <property type="entry name" value="DGGGP_synth"/>
    <property type="match status" value="1"/>
</dbReference>
<dbReference type="InterPro" id="IPR023547">
    <property type="entry name" value="DGGGP_synth"/>
</dbReference>
<dbReference type="InterPro" id="IPR050475">
    <property type="entry name" value="Prenyltransferase_related"/>
</dbReference>
<dbReference type="InterPro" id="IPR000537">
    <property type="entry name" value="UbiA_prenyltransferase"/>
</dbReference>
<dbReference type="InterPro" id="IPR044878">
    <property type="entry name" value="UbiA_sf"/>
</dbReference>
<dbReference type="NCBIfam" id="NF009521">
    <property type="entry name" value="PRK12882.1"/>
    <property type="match status" value="1"/>
</dbReference>
<dbReference type="PANTHER" id="PTHR42723">
    <property type="entry name" value="CHLOROPHYLL SYNTHASE"/>
    <property type="match status" value="1"/>
</dbReference>
<dbReference type="PANTHER" id="PTHR42723:SF1">
    <property type="entry name" value="CHLOROPHYLL SYNTHASE, CHLOROPLASTIC"/>
    <property type="match status" value="1"/>
</dbReference>
<dbReference type="Pfam" id="PF01040">
    <property type="entry name" value="UbiA"/>
    <property type="match status" value="1"/>
</dbReference>
<feature type="chain" id="PRO_0000350711" description="Digeranylgeranylglyceryl phosphate synthase">
    <location>
        <begin position="1"/>
        <end position="289"/>
    </location>
</feature>
<feature type="transmembrane region" description="Helical" evidence="1">
    <location>
        <begin position="18"/>
        <end position="38"/>
    </location>
</feature>
<feature type="transmembrane region" description="Helical" evidence="1">
    <location>
        <begin position="47"/>
        <end position="67"/>
    </location>
</feature>
<feature type="transmembrane region" description="Helical" evidence="1">
    <location>
        <begin position="99"/>
        <end position="119"/>
    </location>
</feature>
<feature type="transmembrane region" description="Helical" evidence="1">
    <location>
        <begin position="120"/>
        <end position="140"/>
    </location>
</feature>
<feature type="transmembrane region" description="Helical" evidence="1">
    <location>
        <begin position="163"/>
        <end position="183"/>
    </location>
</feature>
<feature type="transmembrane region" description="Helical" evidence="1">
    <location>
        <begin position="218"/>
        <end position="238"/>
    </location>
</feature>
<feature type="transmembrane region" description="Helical" evidence="1">
    <location>
        <begin position="243"/>
        <end position="263"/>
    </location>
</feature>
<feature type="transmembrane region" description="Helical" evidence="1">
    <location>
        <begin position="269"/>
        <end position="289"/>
    </location>
</feature>
<reference key="1">
    <citation type="journal article" date="2002" name="J. Mol. Microbiol. Biotechnol.">
        <title>The genome of Methanosarcina mazei: evidence for lateral gene transfer between Bacteria and Archaea.</title>
        <authorList>
            <person name="Deppenmeier U."/>
            <person name="Johann A."/>
            <person name="Hartsch T."/>
            <person name="Merkl R."/>
            <person name="Schmitz R.A."/>
            <person name="Martinez-Arias R."/>
            <person name="Henne A."/>
            <person name="Wiezer A."/>
            <person name="Baeumer S."/>
            <person name="Jacobi C."/>
            <person name="Brueggemann H."/>
            <person name="Lienard T."/>
            <person name="Christmann A."/>
            <person name="Boemecke M."/>
            <person name="Steckel S."/>
            <person name="Bhattacharyya A."/>
            <person name="Lykidis A."/>
            <person name="Overbeek R."/>
            <person name="Klenk H.-P."/>
            <person name="Gunsalus R.P."/>
            <person name="Fritz H.-J."/>
            <person name="Gottschalk G."/>
        </authorList>
    </citation>
    <scope>NUCLEOTIDE SEQUENCE [LARGE SCALE GENOMIC DNA]</scope>
    <source>
        <strain>ATCC BAA-159 / DSM 3647 / Goe1 / Go1 / JCM 11833 / OCM 88</strain>
    </source>
</reference>
<name>DGGGP_METMA</name>
<organism>
    <name type="scientific">Methanosarcina mazei (strain ATCC BAA-159 / DSM 3647 / Goe1 / Go1 / JCM 11833 / OCM 88)</name>
    <name type="common">Methanosarcina frisia</name>
    <dbReference type="NCBI Taxonomy" id="192952"/>
    <lineage>
        <taxon>Archaea</taxon>
        <taxon>Methanobacteriati</taxon>
        <taxon>Methanobacteriota</taxon>
        <taxon>Stenosarchaea group</taxon>
        <taxon>Methanomicrobia</taxon>
        <taxon>Methanosarcinales</taxon>
        <taxon>Methanosarcinaceae</taxon>
        <taxon>Methanosarcina</taxon>
    </lineage>
</organism>
<proteinExistence type="inferred from homology"/>
<keyword id="KW-1003">Cell membrane</keyword>
<keyword id="KW-0444">Lipid biosynthesis</keyword>
<keyword id="KW-0443">Lipid metabolism</keyword>
<keyword id="KW-0460">Magnesium</keyword>
<keyword id="KW-0472">Membrane</keyword>
<keyword id="KW-0594">Phospholipid biosynthesis</keyword>
<keyword id="KW-1208">Phospholipid metabolism</keyword>
<keyword id="KW-0808">Transferase</keyword>
<keyword id="KW-0812">Transmembrane</keyword>
<keyword id="KW-1133">Transmembrane helix</keyword>
<protein>
    <recommendedName>
        <fullName evidence="1">Digeranylgeranylglyceryl phosphate synthase</fullName>
        <shortName evidence="1">DGGGP synthase</shortName>
        <shortName evidence="1">DGGGPS</shortName>
        <ecNumber evidence="1">2.5.1.42</ecNumber>
    </recommendedName>
    <alternativeName>
        <fullName evidence="1">(S)-2,3-di-O-geranylgeranylglyceryl phosphate synthase</fullName>
    </alternativeName>
    <alternativeName>
        <fullName evidence="1">Geranylgeranylglycerol-phosphate geranylgeranyltransferase</fullName>
    </alternativeName>
</protein>
<accession>Q8PV96</accession>